<organism>
    <name type="scientific">Bradyrhizobium sp. (strain ORS 278)</name>
    <dbReference type="NCBI Taxonomy" id="114615"/>
    <lineage>
        <taxon>Bacteria</taxon>
        <taxon>Pseudomonadati</taxon>
        <taxon>Pseudomonadota</taxon>
        <taxon>Alphaproteobacteria</taxon>
        <taxon>Hyphomicrobiales</taxon>
        <taxon>Nitrobacteraceae</taxon>
        <taxon>Bradyrhizobium</taxon>
    </lineage>
</organism>
<gene>
    <name evidence="1" type="primary">glnE</name>
    <name type="ordered locus">BRADO2744</name>
</gene>
<keyword id="KW-0067">ATP-binding</keyword>
<keyword id="KW-0460">Magnesium</keyword>
<keyword id="KW-0511">Multifunctional enzyme</keyword>
<keyword id="KW-0547">Nucleotide-binding</keyword>
<keyword id="KW-0548">Nucleotidyltransferase</keyword>
<keyword id="KW-1185">Reference proteome</keyword>
<keyword id="KW-0808">Transferase</keyword>
<name>GLNE_BRASO</name>
<dbReference type="EC" id="2.7.7.89" evidence="1"/>
<dbReference type="EC" id="2.7.7.42" evidence="1"/>
<dbReference type="EMBL" id="CU234118">
    <property type="protein sequence ID" value="CAL76556.1"/>
    <property type="molecule type" value="Genomic_DNA"/>
</dbReference>
<dbReference type="RefSeq" id="WP_011925761.1">
    <property type="nucleotide sequence ID" value="NC_009445.1"/>
</dbReference>
<dbReference type="SMR" id="A4YRN0"/>
<dbReference type="STRING" id="114615.BRADO2744"/>
<dbReference type="KEGG" id="bra:BRADO2744"/>
<dbReference type="eggNOG" id="COG1391">
    <property type="taxonomic scope" value="Bacteria"/>
</dbReference>
<dbReference type="HOGENOM" id="CLU_006233_0_0_5"/>
<dbReference type="OrthoDB" id="9759366at2"/>
<dbReference type="Proteomes" id="UP000001994">
    <property type="component" value="Chromosome"/>
</dbReference>
<dbReference type="GO" id="GO:0005829">
    <property type="term" value="C:cytosol"/>
    <property type="evidence" value="ECO:0007669"/>
    <property type="project" value="TreeGrafter"/>
</dbReference>
<dbReference type="GO" id="GO:0008882">
    <property type="term" value="F:[glutamate-ammonia-ligase] adenylyltransferase activity"/>
    <property type="evidence" value="ECO:0007669"/>
    <property type="project" value="UniProtKB-UniRule"/>
</dbReference>
<dbReference type="GO" id="GO:0047388">
    <property type="term" value="F:[glutamine synthetase]-adenylyl-L-tyrosine phosphorylase activity"/>
    <property type="evidence" value="ECO:0007669"/>
    <property type="project" value="UniProtKB-EC"/>
</dbReference>
<dbReference type="GO" id="GO:0005524">
    <property type="term" value="F:ATP binding"/>
    <property type="evidence" value="ECO:0007669"/>
    <property type="project" value="UniProtKB-UniRule"/>
</dbReference>
<dbReference type="GO" id="GO:0000287">
    <property type="term" value="F:magnesium ion binding"/>
    <property type="evidence" value="ECO:0007669"/>
    <property type="project" value="UniProtKB-UniRule"/>
</dbReference>
<dbReference type="GO" id="GO:0000820">
    <property type="term" value="P:regulation of glutamine family amino acid metabolic process"/>
    <property type="evidence" value="ECO:0007669"/>
    <property type="project" value="UniProtKB-UniRule"/>
</dbReference>
<dbReference type="CDD" id="cd05401">
    <property type="entry name" value="NT_GlnE_GlnD_like"/>
    <property type="match status" value="2"/>
</dbReference>
<dbReference type="FunFam" id="1.20.120.330:FF:000028">
    <property type="entry name" value="Bifunctional glutamine synthetase adenylyltransferase/adenylyl-removing enzyme"/>
    <property type="match status" value="1"/>
</dbReference>
<dbReference type="FunFam" id="3.30.460.10:FF:000081">
    <property type="entry name" value="Bifunctional glutamine synthetase adenylyltransferase/adenylyl-removing enzyme"/>
    <property type="match status" value="1"/>
</dbReference>
<dbReference type="Gene3D" id="3.30.460.10">
    <property type="entry name" value="Beta Polymerase, domain 2"/>
    <property type="match status" value="2"/>
</dbReference>
<dbReference type="Gene3D" id="1.20.120.330">
    <property type="entry name" value="Nucleotidyltransferases domain 2"/>
    <property type="match status" value="2"/>
</dbReference>
<dbReference type="HAMAP" id="MF_00802">
    <property type="entry name" value="GlnE"/>
    <property type="match status" value="1"/>
</dbReference>
<dbReference type="InterPro" id="IPR023057">
    <property type="entry name" value="GlnE"/>
</dbReference>
<dbReference type="InterPro" id="IPR005190">
    <property type="entry name" value="GlnE_rpt_dom"/>
</dbReference>
<dbReference type="InterPro" id="IPR043519">
    <property type="entry name" value="NT_sf"/>
</dbReference>
<dbReference type="InterPro" id="IPR013546">
    <property type="entry name" value="PII_UdlTrfase/GS_AdlTrfase"/>
</dbReference>
<dbReference type="NCBIfam" id="NF008292">
    <property type="entry name" value="PRK11072.1"/>
    <property type="match status" value="1"/>
</dbReference>
<dbReference type="NCBIfam" id="NF010706">
    <property type="entry name" value="PRK14108.1"/>
    <property type="match status" value="1"/>
</dbReference>
<dbReference type="PANTHER" id="PTHR30621:SF0">
    <property type="entry name" value="BIFUNCTIONAL GLUTAMINE SYNTHETASE ADENYLYLTRANSFERASE_ADENYLYL-REMOVING ENZYME"/>
    <property type="match status" value="1"/>
</dbReference>
<dbReference type="PANTHER" id="PTHR30621">
    <property type="entry name" value="GLUTAMINE SYNTHETASE ADENYLYLTRANSFERASE"/>
    <property type="match status" value="1"/>
</dbReference>
<dbReference type="Pfam" id="PF08335">
    <property type="entry name" value="GlnD_UR_UTase"/>
    <property type="match status" value="2"/>
</dbReference>
<dbReference type="Pfam" id="PF03710">
    <property type="entry name" value="GlnE"/>
    <property type="match status" value="2"/>
</dbReference>
<dbReference type="SUPFAM" id="SSF81301">
    <property type="entry name" value="Nucleotidyltransferase"/>
    <property type="match status" value="2"/>
</dbReference>
<dbReference type="SUPFAM" id="SSF81593">
    <property type="entry name" value="Nucleotidyltransferase substrate binding subunit/domain"/>
    <property type="match status" value="2"/>
</dbReference>
<comment type="function">
    <text evidence="1">Involved in the regulation of glutamine synthetase GlnA, a key enzyme in the process to assimilate ammonia. When cellular nitrogen levels are high, the C-terminal adenylyl transferase (AT) inactivates GlnA by covalent transfer of an adenylyl group from ATP to specific tyrosine residue of GlnA, thus reducing its activity. Conversely, when nitrogen levels are low, the N-terminal adenylyl removase (AR) activates GlnA by removing the adenylyl group by phosphorolysis, increasing its activity. The regulatory region of GlnE binds the signal transduction protein PII (GlnB) which indicates the nitrogen status of the cell.</text>
</comment>
<comment type="catalytic activity">
    <reaction evidence="1">
        <text>[glutamine synthetase]-O(4)-(5'-adenylyl)-L-tyrosine + phosphate = [glutamine synthetase]-L-tyrosine + ADP</text>
        <dbReference type="Rhea" id="RHEA:43716"/>
        <dbReference type="Rhea" id="RHEA-COMP:10660"/>
        <dbReference type="Rhea" id="RHEA-COMP:10661"/>
        <dbReference type="ChEBI" id="CHEBI:43474"/>
        <dbReference type="ChEBI" id="CHEBI:46858"/>
        <dbReference type="ChEBI" id="CHEBI:83624"/>
        <dbReference type="ChEBI" id="CHEBI:456216"/>
        <dbReference type="EC" id="2.7.7.89"/>
    </reaction>
</comment>
<comment type="catalytic activity">
    <reaction evidence="1">
        <text>[glutamine synthetase]-L-tyrosine + ATP = [glutamine synthetase]-O(4)-(5'-adenylyl)-L-tyrosine + diphosphate</text>
        <dbReference type="Rhea" id="RHEA:18589"/>
        <dbReference type="Rhea" id="RHEA-COMP:10660"/>
        <dbReference type="Rhea" id="RHEA-COMP:10661"/>
        <dbReference type="ChEBI" id="CHEBI:30616"/>
        <dbReference type="ChEBI" id="CHEBI:33019"/>
        <dbReference type="ChEBI" id="CHEBI:46858"/>
        <dbReference type="ChEBI" id="CHEBI:83624"/>
        <dbReference type="EC" id="2.7.7.42"/>
    </reaction>
</comment>
<comment type="cofactor">
    <cofactor evidence="1">
        <name>Mg(2+)</name>
        <dbReference type="ChEBI" id="CHEBI:18420"/>
    </cofactor>
</comment>
<comment type="similarity">
    <text evidence="1">Belongs to the GlnE family.</text>
</comment>
<feature type="chain" id="PRO_1000212984" description="Bifunctional glutamine synthetase adenylyltransferase/adenylyl-removing enzyme">
    <location>
        <begin position="1"/>
        <end position="986"/>
    </location>
</feature>
<feature type="region of interest" description="Adenylyl removase" evidence="1">
    <location>
        <begin position="1"/>
        <end position="473"/>
    </location>
</feature>
<feature type="region of interest" description="Adenylyl transferase" evidence="1">
    <location>
        <begin position="478"/>
        <end position="986"/>
    </location>
</feature>
<reference key="1">
    <citation type="journal article" date="2007" name="Science">
        <title>Legumes symbioses: absence of nod genes in photosynthetic bradyrhizobia.</title>
        <authorList>
            <person name="Giraud E."/>
            <person name="Moulin L."/>
            <person name="Vallenet D."/>
            <person name="Barbe V."/>
            <person name="Cytryn E."/>
            <person name="Avarre J.-C."/>
            <person name="Jaubert M."/>
            <person name="Simon D."/>
            <person name="Cartieaux F."/>
            <person name="Prin Y."/>
            <person name="Bena G."/>
            <person name="Hannibal L."/>
            <person name="Fardoux J."/>
            <person name="Kojadinovic M."/>
            <person name="Vuillet L."/>
            <person name="Lajus A."/>
            <person name="Cruveiller S."/>
            <person name="Rouy Z."/>
            <person name="Mangenot S."/>
            <person name="Segurens B."/>
            <person name="Dossat C."/>
            <person name="Franck W.L."/>
            <person name="Chang W.-S."/>
            <person name="Saunders E."/>
            <person name="Bruce D."/>
            <person name="Richardson P."/>
            <person name="Normand P."/>
            <person name="Dreyfus B."/>
            <person name="Pignol D."/>
            <person name="Stacey G."/>
            <person name="Emerich D."/>
            <person name="Vermeglio A."/>
            <person name="Medigue C."/>
            <person name="Sadowsky M."/>
        </authorList>
    </citation>
    <scope>NUCLEOTIDE SEQUENCE [LARGE SCALE GENOMIC DNA]</scope>
    <source>
        <strain>ORS 278</strain>
    </source>
</reference>
<sequence length="986" mass="109423">MTSSAPGNADGQSRLAARFVAGPHVRAPDTAEHRLQDWLAELEPSLAASLRDQFASGWARSILLGIVESSPYLFDLIRADAQRLDRLLRCDPQTHLAELIARTGREVFACSGEADVMSLLRRLKSEAALLIALCDIGGVWPVMQVTAALTDVAVAAVQMALRHLLRQEAARGRLAPIDPAQPELGCGLFVLAMGKMGAGELNYSSDIDLIVFFDPDATTLAHDIEPQPFFVRVTQALARLLQSRTADGYVFRVDLRLRPDPASTQVAMSTEAALHYYEREGRTWERAAMIKARICAGDVAAGEAMLAELSPFVWRKHLDFQALTDVHDMKRQMQVYRGHSEIAVEGHNVKVGRGGIREIEFFAQTQQLIAGGRHPELRVRPTLQALDVLTASNWITAQARDELTSAYEFLRRVEHRLQMMADEQIHSLPDDVDGVARFACFFGYESRERFATDLLFHLDIVQGHYARLFEGDPTGTVSLPPVNYGAGPDEPRLLEHLVALGFRDPMMVALTLQQWLAGDYRVFRAEATRTTFNEFLPALIDGLAHADEPDRAVVAFDRFLQALQLGGRLITLLGQNRDLVALVALVLGAAPRLGDMLARQPRLMDGLIDPRFFGAIPDKRELSTRLAATLQDAGSYEEFLDRLRLFGQESLFLIGTRILSGTVSAQQAGTAFADVAEGIVHTVHNLVIERFAAQHGRIRGQETAIIAMGRLGAREMTASSDLDLILLYDFDADAPDSDGERPLQGAHYFARFTQRLISAFTSRTNYGVLYDIDMRLRPSGRAGPLASHIDSFAHYQEHEAWTWEHMALTRARVISASPAFRARIEAIIQTALRRSRDAQAIARDVADMRRAIAAEKGETDLWDLKHAAGGMVDIDFVAQYLQLVHAASKPEILDISSLQVLDHAERLGVLPRADAVILRHAARMYHDLTQILRLCVSDKFKPDQAGDDLLRVMTRAGDAPDFSALEARVRETQSEVRRVFTALLER</sequence>
<protein>
    <recommendedName>
        <fullName evidence="1">Bifunctional glutamine synthetase adenylyltransferase/adenylyl-removing enzyme</fullName>
    </recommendedName>
    <alternativeName>
        <fullName evidence="1">ATP:glutamine synthetase adenylyltransferase</fullName>
    </alternativeName>
    <alternativeName>
        <fullName evidence="1">ATase</fullName>
    </alternativeName>
    <domain>
        <recommendedName>
            <fullName evidence="1">Glutamine synthetase adenylyl-L-tyrosine phosphorylase</fullName>
            <ecNumber evidence="1">2.7.7.89</ecNumber>
        </recommendedName>
        <alternativeName>
            <fullName evidence="1">Adenylyl removase</fullName>
            <shortName evidence="1">AR</shortName>
            <shortName evidence="1">AT-N</shortName>
        </alternativeName>
    </domain>
    <domain>
        <recommendedName>
            <fullName evidence="1">Glutamine synthetase adenylyl transferase</fullName>
            <ecNumber evidence="1">2.7.7.42</ecNumber>
        </recommendedName>
        <alternativeName>
            <fullName evidence="1">Adenylyl transferase</fullName>
            <shortName evidence="1">AT</shortName>
            <shortName evidence="1">AT-C</shortName>
        </alternativeName>
    </domain>
</protein>
<accession>A4YRN0</accession>
<evidence type="ECO:0000255" key="1">
    <source>
        <dbReference type="HAMAP-Rule" id="MF_00802"/>
    </source>
</evidence>
<proteinExistence type="inferred from homology"/>